<protein>
    <recommendedName>
        <fullName evidence="1">Potassium-transporting ATPase KdpC subunit</fullName>
    </recommendedName>
    <alternativeName>
        <fullName evidence="1">ATP phosphohydrolase [potassium-transporting] C chain</fullName>
    </alternativeName>
    <alternativeName>
        <fullName evidence="1">Potassium-binding and translocating subunit C</fullName>
    </alternativeName>
    <alternativeName>
        <fullName evidence="1">Potassium-translocating ATPase C chain</fullName>
    </alternativeName>
</protein>
<organism>
    <name type="scientific">Burkholderia mallei (strain SAVP1)</name>
    <dbReference type="NCBI Taxonomy" id="320388"/>
    <lineage>
        <taxon>Bacteria</taxon>
        <taxon>Pseudomonadati</taxon>
        <taxon>Pseudomonadota</taxon>
        <taxon>Betaproteobacteria</taxon>
        <taxon>Burkholderiales</taxon>
        <taxon>Burkholderiaceae</taxon>
        <taxon>Burkholderia</taxon>
        <taxon>pseudomallei group</taxon>
    </lineage>
</organism>
<accession>A1V2H2</accession>
<feature type="chain" id="PRO_1000022272" description="Potassium-transporting ATPase KdpC subunit">
    <location>
        <begin position="1"/>
        <end position="193"/>
    </location>
</feature>
<feature type="transmembrane region" description="Helical" evidence="1">
    <location>
        <begin position="7"/>
        <end position="27"/>
    </location>
</feature>
<name>KDPC_BURMS</name>
<evidence type="ECO:0000255" key="1">
    <source>
        <dbReference type="HAMAP-Rule" id="MF_00276"/>
    </source>
</evidence>
<gene>
    <name evidence="1" type="primary">kdpC</name>
    <name type="ordered locus">BMASAVP1_A1085</name>
</gene>
<dbReference type="EMBL" id="CP000526">
    <property type="protein sequence ID" value="ABM49904.1"/>
    <property type="molecule type" value="Genomic_DNA"/>
</dbReference>
<dbReference type="RefSeq" id="WP_004186443.1">
    <property type="nucleotide sequence ID" value="NC_008785.1"/>
</dbReference>
<dbReference type="SMR" id="A1V2H2"/>
<dbReference type="GeneID" id="93059654"/>
<dbReference type="KEGG" id="bmv:BMASAVP1_A1085"/>
<dbReference type="HOGENOM" id="CLU_077094_2_0_4"/>
<dbReference type="GO" id="GO:0005886">
    <property type="term" value="C:plasma membrane"/>
    <property type="evidence" value="ECO:0007669"/>
    <property type="project" value="UniProtKB-SubCell"/>
</dbReference>
<dbReference type="GO" id="GO:0005524">
    <property type="term" value="F:ATP binding"/>
    <property type="evidence" value="ECO:0007669"/>
    <property type="project" value="UniProtKB-UniRule"/>
</dbReference>
<dbReference type="GO" id="GO:0008556">
    <property type="term" value="F:P-type potassium transmembrane transporter activity"/>
    <property type="evidence" value="ECO:0007669"/>
    <property type="project" value="InterPro"/>
</dbReference>
<dbReference type="HAMAP" id="MF_00276">
    <property type="entry name" value="KdpC"/>
    <property type="match status" value="1"/>
</dbReference>
<dbReference type="InterPro" id="IPR003820">
    <property type="entry name" value="KdpC"/>
</dbReference>
<dbReference type="NCBIfam" id="TIGR00681">
    <property type="entry name" value="kdpC"/>
    <property type="match status" value="1"/>
</dbReference>
<dbReference type="NCBIfam" id="NF001454">
    <property type="entry name" value="PRK00315.1"/>
    <property type="match status" value="1"/>
</dbReference>
<dbReference type="PANTHER" id="PTHR30042">
    <property type="entry name" value="POTASSIUM-TRANSPORTING ATPASE C CHAIN"/>
    <property type="match status" value="1"/>
</dbReference>
<dbReference type="PANTHER" id="PTHR30042:SF2">
    <property type="entry name" value="POTASSIUM-TRANSPORTING ATPASE KDPC SUBUNIT"/>
    <property type="match status" value="1"/>
</dbReference>
<dbReference type="Pfam" id="PF02669">
    <property type="entry name" value="KdpC"/>
    <property type="match status" value="1"/>
</dbReference>
<dbReference type="PIRSF" id="PIRSF001296">
    <property type="entry name" value="K_ATPase_KdpC"/>
    <property type="match status" value="1"/>
</dbReference>
<comment type="function">
    <text evidence="1">Part of the high-affinity ATP-driven potassium transport (or Kdp) system, which catalyzes the hydrolysis of ATP coupled with the electrogenic transport of potassium into the cytoplasm. This subunit acts as a catalytic chaperone that increases the ATP-binding affinity of the ATP-hydrolyzing subunit KdpB by the formation of a transient KdpB/KdpC/ATP ternary complex.</text>
</comment>
<comment type="subunit">
    <text evidence="1">The system is composed of three essential subunits: KdpA, KdpB and KdpC.</text>
</comment>
<comment type="subcellular location">
    <subcellularLocation>
        <location evidence="1">Cell inner membrane</location>
        <topology evidence="1">Single-pass membrane protein</topology>
    </subcellularLocation>
</comment>
<comment type="similarity">
    <text evidence="1">Belongs to the KdpC family.</text>
</comment>
<sequence length="193" mass="20105">MKSLFRPLIVVFVVLVAVTGLAYPAVMTVFGQAVFPAQANGSLIEKGGRVVGSALIGQQFDAPQYFWGRLSATSPMPYNAAGSGGSNLGPLNPALKDQVKSRLDALKAAGTDLSQPVPVDLVTASASGLDPEISPAAADYQVARVARARKMADADVRRLVADHTSGRQFGVLGEPRVNVLKLNLALDAAQAAH</sequence>
<proteinExistence type="inferred from homology"/>
<reference key="1">
    <citation type="journal article" date="2010" name="Genome Biol. Evol.">
        <title>Continuing evolution of Burkholderia mallei through genome reduction and large-scale rearrangements.</title>
        <authorList>
            <person name="Losada L."/>
            <person name="Ronning C.M."/>
            <person name="DeShazer D."/>
            <person name="Woods D."/>
            <person name="Fedorova N."/>
            <person name="Kim H.S."/>
            <person name="Shabalina S.A."/>
            <person name="Pearson T.R."/>
            <person name="Brinkac L."/>
            <person name="Tan P."/>
            <person name="Nandi T."/>
            <person name="Crabtree J."/>
            <person name="Badger J."/>
            <person name="Beckstrom-Sternberg S."/>
            <person name="Saqib M."/>
            <person name="Schutzer S.E."/>
            <person name="Keim P."/>
            <person name="Nierman W.C."/>
        </authorList>
    </citation>
    <scope>NUCLEOTIDE SEQUENCE [LARGE SCALE GENOMIC DNA]</scope>
    <source>
        <strain>SAVP1</strain>
    </source>
</reference>
<keyword id="KW-0067">ATP-binding</keyword>
<keyword id="KW-0997">Cell inner membrane</keyword>
<keyword id="KW-1003">Cell membrane</keyword>
<keyword id="KW-0406">Ion transport</keyword>
<keyword id="KW-0472">Membrane</keyword>
<keyword id="KW-0547">Nucleotide-binding</keyword>
<keyword id="KW-0630">Potassium</keyword>
<keyword id="KW-0633">Potassium transport</keyword>
<keyword id="KW-0812">Transmembrane</keyword>
<keyword id="KW-1133">Transmembrane helix</keyword>
<keyword id="KW-0813">Transport</keyword>